<accession>P14965</accession>
<name>PYRF_SCHPO</name>
<proteinExistence type="inferred from homology"/>
<gene>
    <name type="primary">ura4</name>
    <name type="ORF">SPCC330.05c</name>
</gene>
<evidence type="ECO:0000250" key="1"/>
<evidence type="ECO:0000255" key="2">
    <source>
        <dbReference type="PROSITE-ProRule" id="PRU10110"/>
    </source>
</evidence>
<evidence type="ECO:0000305" key="3"/>
<dbReference type="EC" id="4.1.1.23"/>
<dbReference type="EMBL" id="X13976">
    <property type="protein sequence ID" value="CAA32157.1"/>
    <property type="molecule type" value="Genomic_DNA"/>
</dbReference>
<dbReference type="EMBL" id="CU329672">
    <property type="protein sequence ID" value="CAA20910.1"/>
    <property type="molecule type" value="Genomic_DNA"/>
</dbReference>
<dbReference type="PIR" id="S08503">
    <property type="entry name" value="S08503"/>
</dbReference>
<dbReference type="RefSeq" id="NP_587705.1">
    <property type="nucleotide sequence ID" value="NM_001022700.2"/>
</dbReference>
<dbReference type="SMR" id="P14965"/>
<dbReference type="BioGRID" id="275351">
    <property type="interactions" value="14"/>
</dbReference>
<dbReference type="FunCoup" id="P14965">
    <property type="interactions" value="1037"/>
</dbReference>
<dbReference type="STRING" id="284812.P14965"/>
<dbReference type="iPTMnet" id="P14965"/>
<dbReference type="PaxDb" id="4896-SPCC330.05c.1"/>
<dbReference type="EnsemblFungi" id="SPCC330.05c.1">
    <property type="protein sequence ID" value="SPCC330.05c.1:pep"/>
    <property type="gene ID" value="SPCC330.05c"/>
</dbReference>
<dbReference type="GeneID" id="2538768"/>
<dbReference type="KEGG" id="spo:2538768"/>
<dbReference type="PomBase" id="SPCC330.05c">
    <property type="gene designation" value="ura4"/>
</dbReference>
<dbReference type="VEuPathDB" id="FungiDB:SPCC330.05c"/>
<dbReference type="eggNOG" id="KOG1377">
    <property type="taxonomic scope" value="Eukaryota"/>
</dbReference>
<dbReference type="HOGENOM" id="CLU_030821_0_0_1"/>
<dbReference type="InParanoid" id="P14965"/>
<dbReference type="OMA" id="CLIKTHI"/>
<dbReference type="PhylomeDB" id="P14965"/>
<dbReference type="UniPathway" id="UPA00070">
    <property type="reaction ID" value="UER00120"/>
</dbReference>
<dbReference type="PRO" id="PR:P14965"/>
<dbReference type="Proteomes" id="UP000002485">
    <property type="component" value="Chromosome III"/>
</dbReference>
<dbReference type="GO" id="GO:0005829">
    <property type="term" value="C:cytosol"/>
    <property type="evidence" value="ECO:0007005"/>
    <property type="project" value="PomBase"/>
</dbReference>
<dbReference type="GO" id="GO:0005634">
    <property type="term" value="C:nucleus"/>
    <property type="evidence" value="ECO:0007005"/>
    <property type="project" value="PomBase"/>
</dbReference>
<dbReference type="GO" id="GO:0140453">
    <property type="term" value="C:protein aggregate center"/>
    <property type="evidence" value="ECO:0000314"/>
    <property type="project" value="PomBase"/>
</dbReference>
<dbReference type="GO" id="GO:0004590">
    <property type="term" value="F:orotidine-5'-phosphate decarboxylase activity"/>
    <property type="evidence" value="ECO:0000315"/>
    <property type="project" value="PomBase"/>
</dbReference>
<dbReference type="GO" id="GO:0006207">
    <property type="term" value="P:'de novo' pyrimidine nucleobase biosynthetic process"/>
    <property type="evidence" value="ECO:0000316"/>
    <property type="project" value="PomBase"/>
</dbReference>
<dbReference type="GO" id="GO:0044205">
    <property type="term" value="P:'de novo' UMP biosynthetic process"/>
    <property type="evidence" value="ECO:0000315"/>
    <property type="project" value="PomBase"/>
</dbReference>
<dbReference type="CDD" id="cd04725">
    <property type="entry name" value="OMP_decarboxylase_like"/>
    <property type="match status" value="1"/>
</dbReference>
<dbReference type="FunFam" id="3.20.20.70:FF:000114">
    <property type="entry name" value="Decarboxylase,orotidine phosphate"/>
    <property type="match status" value="1"/>
</dbReference>
<dbReference type="Gene3D" id="3.20.20.70">
    <property type="entry name" value="Aldolase class I"/>
    <property type="match status" value="1"/>
</dbReference>
<dbReference type="InterPro" id="IPR013785">
    <property type="entry name" value="Aldolase_TIM"/>
</dbReference>
<dbReference type="InterPro" id="IPR014732">
    <property type="entry name" value="OMPdecase"/>
</dbReference>
<dbReference type="InterPro" id="IPR018089">
    <property type="entry name" value="OMPdecase_AS"/>
</dbReference>
<dbReference type="InterPro" id="IPR001754">
    <property type="entry name" value="OMPdeCOase_dom"/>
</dbReference>
<dbReference type="InterPro" id="IPR011060">
    <property type="entry name" value="RibuloseP-bd_barrel"/>
</dbReference>
<dbReference type="NCBIfam" id="TIGR01740">
    <property type="entry name" value="pyrF"/>
    <property type="match status" value="1"/>
</dbReference>
<dbReference type="PANTHER" id="PTHR19278">
    <property type="entry name" value="OROTATE PHOSPHORIBOSYLTRANSFERASE"/>
    <property type="match status" value="1"/>
</dbReference>
<dbReference type="PANTHER" id="PTHR19278:SF9">
    <property type="entry name" value="URIDINE 5'-MONOPHOSPHATE SYNTHASE"/>
    <property type="match status" value="1"/>
</dbReference>
<dbReference type="Pfam" id="PF00215">
    <property type="entry name" value="OMPdecase"/>
    <property type="match status" value="1"/>
</dbReference>
<dbReference type="SMART" id="SM00934">
    <property type="entry name" value="OMPdecase"/>
    <property type="match status" value="1"/>
</dbReference>
<dbReference type="SUPFAM" id="SSF51366">
    <property type="entry name" value="Ribulose-phoshate binding barrel"/>
    <property type="match status" value="1"/>
</dbReference>
<dbReference type="PROSITE" id="PS00156">
    <property type="entry name" value="OMPDECASE"/>
    <property type="match status" value="1"/>
</dbReference>
<feature type="chain" id="PRO_0000134683" description="Orotidine 5'-phosphate decarboxylase">
    <location>
        <begin position="1"/>
        <end position="264"/>
    </location>
</feature>
<feature type="active site" description="Proton donor" evidence="2">
    <location>
        <position position="95"/>
    </location>
</feature>
<feature type="binding site" evidence="1">
    <location>
        <position position="40"/>
    </location>
    <ligand>
        <name>substrate</name>
    </ligand>
</feature>
<feature type="binding site" evidence="1">
    <location>
        <begin position="62"/>
        <end position="64"/>
    </location>
    <ligand>
        <name>substrate</name>
    </ligand>
</feature>
<feature type="binding site" evidence="1">
    <location>
        <begin position="93"/>
        <end position="102"/>
    </location>
    <ligand>
        <name>substrate</name>
    </ligand>
</feature>
<feature type="binding site" evidence="1">
    <location>
        <position position="214"/>
    </location>
    <ligand>
        <name>substrate</name>
    </ligand>
</feature>
<feature type="binding site" evidence="1">
    <location>
        <position position="233"/>
    </location>
    <ligand>
        <name>substrate</name>
    </ligand>
</feature>
<keyword id="KW-0210">Decarboxylase</keyword>
<keyword id="KW-0456">Lyase</keyword>
<keyword id="KW-0665">Pyrimidine biosynthesis</keyword>
<keyword id="KW-1185">Reference proteome</keyword>
<organism>
    <name type="scientific">Schizosaccharomyces pombe (strain 972 / ATCC 24843)</name>
    <name type="common">Fission yeast</name>
    <dbReference type="NCBI Taxonomy" id="284812"/>
    <lineage>
        <taxon>Eukaryota</taxon>
        <taxon>Fungi</taxon>
        <taxon>Dikarya</taxon>
        <taxon>Ascomycota</taxon>
        <taxon>Taphrinomycotina</taxon>
        <taxon>Schizosaccharomycetes</taxon>
        <taxon>Schizosaccharomycetales</taxon>
        <taxon>Schizosaccharomycetaceae</taxon>
        <taxon>Schizosaccharomyces</taxon>
    </lineage>
</organism>
<comment type="catalytic activity">
    <reaction evidence="2">
        <text>orotidine 5'-phosphate + H(+) = UMP + CO2</text>
        <dbReference type="Rhea" id="RHEA:11596"/>
        <dbReference type="ChEBI" id="CHEBI:15378"/>
        <dbReference type="ChEBI" id="CHEBI:16526"/>
        <dbReference type="ChEBI" id="CHEBI:57538"/>
        <dbReference type="ChEBI" id="CHEBI:57865"/>
        <dbReference type="EC" id="4.1.1.23"/>
    </reaction>
</comment>
<comment type="pathway">
    <text>Pyrimidine metabolism; UMP biosynthesis via de novo pathway; UMP from orotate: step 2/2.</text>
</comment>
<comment type="similarity">
    <text evidence="3">Belongs to the OMP decarboxylase family.</text>
</comment>
<reference key="1">
    <citation type="journal article" date="1988" name="Mol. Gen. Genet.">
        <title>Genetic engineering of Schizosaccharomyces pombe: a system for gene disruption and replacement using the ura4 gene as a selectable marker.</title>
        <authorList>
            <person name="Grimm C."/>
            <person name="Kohli J."/>
            <person name="Murray J."/>
            <person name="Maundrell K."/>
        </authorList>
    </citation>
    <scope>NUCLEOTIDE SEQUENCE [GENOMIC DNA]</scope>
</reference>
<reference key="2">
    <citation type="journal article" date="2002" name="Nature">
        <title>The genome sequence of Schizosaccharomyces pombe.</title>
        <authorList>
            <person name="Wood V."/>
            <person name="Gwilliam R."/>
            <person name="Rajandream M.A."/>
            <person name="Lyne M.H."/>
            <person name="Lyne R."/>
            <person name="Stewart A."/>
            <person name="Sgouros J.G."/>
            <person name="Peat N."/>
            <person name="Hayles J."/>
            <person name="Baker S.G."/>
            <person name="Basham D."/>
            <person name="Bowman S."/>
            <person name="Brooks K."/>
            <person name="Brown D."/>
            <person name="Brown S."/>
            <person name="Chillingworth T."/>
            <person name="Churcher C.M."/>
            <person name="Collins M."/>
            <person name="Connor R."/>
            <person name="Cronin A."/>
            <person name="Davis P."/>
            <person name="Feltwell T."/>
            <person name="Fraser A."/>
            <person name="Gentles S."/>
            <person name="Goble A."/>
            <person name="Hamlin N."/>
            <person name="Harris D.E."/>
            <person name="Hidalgo J."/>
            <person name="Hodgson G."/>
            <person name="Holroyd S."/>
            <person name="Hornsby T."/>
            <person name="Howarth S."/>
            <person name="Huckle E.J."/>
            <person name="Hunt S."/>
            <person name="Jagels K."/>
            <person name="James K.D."/>
            <person name="Jones L."/>
            <person name="Jones M."/>
            <person name="Leather S."/>
            <person name="McDonald S."/>
            <person name="McLean J."/>
            <person name="Mooney P."/>
            <person name="Moule S."/>
            <person name="Mungall K.L."/>
            <person name="Murphy L.D."/>
            <person name="Niblett D."/>
            <person name="Odell C."/>
            <person name="Oliver K."/>
            <person name="O'Neil S."/>
            <person name="Pearson D."/>
            <person name="Quail M.A."/>
            <person name="Rabbinowitsch E."/>
            <person name="Rutherford K.M."/>
            <person name="Rutter S."/>
            <person name="Saunders D."/>
            <person name="Seeger K."/>
            <person name="Sharp S."/>
            <person name="Skelton J."/>
            <person name="Simmonds M.N."/>
            <person name="Squares R."/>
            <person name="Squares S."/>
            <person name="Stevens K."/>
            <person name="Taylor K."/>
            <person name="Taylor R.G."/>
            <person name="Tivey A."/>
            <person name="Walsh S.V."/>
            <person name="Warren T."/>
            <person name="Whitehead S."/>
            <person name="Woodward J.R."/>
            <person name="Volckaert G."/>
            <person name="Aert R."/>
            <person name="Robben J."/>
            <person name="Grymonprez B."/>
            <person name="Weltjens I."/>
            <person name="Vanstreels E."/>
            <person name="Rieger M."/>
            <person name="Schaefer M."/>
            <person name="Mueller-Auer S."/>
            <person name="Gabel C."/>
            <person name="Fuchs M."/>
            <person name="Duesterhoeft A."/>
            <person name="Fritzc C."/>
            <person name="Holzer E."/>
            <person name="Moestl D."/>
            <person name="Hilbert H."/>
            <person name="Borzym K."/>
            <person name="Langer I."/>
            <person name="Beck A."/>
            <person name="Lehrach H."/>
            <person name="Reinhardt R."/>
            <person name="Pohl T.M."/>
            <person name="Eger P."/>
            <person name="Zimmermann W."/>
            <person name="Wedler H."/>
            <person name="Wambutt R."/>
            <person name="Purnelle B."/>
            <person name="Goffeau A."/>
            <person name="Cadieu E."/>
            <person name="Dreano S."/>
            <person name="Gloux S."/>
            <person name="Lelaure V."/>
            <person name="Mottier S."/>
            <person name="Galibert F."/>
            <person name="Aves S.J."/>
            <person name="Xiang Z."/>
            <person name="Hunt C."/>
            <person name="Moore K."/>
            <person name="Hurst S.M."/>
            <person name="Lucas M."/>
            <person name="Rochet M."/>
            <person name="Gaillardin C."/>
            <person name="Tallada V.A."/>
            <person name="Garzon A."/>
            <person name="Thode G."/>
            <person name="Daga R.R."/>
            <person name="Cruzado L."/>
            <person name="Jimenez J."/>
            <person name="Sanchez M."/>
            <person name="del Rey F."/>
            <person name="Benito J."/>
            <person name="Dominguez A."/>
            <person name="Revuelta J.L."/>
            <person name="Moreno S."/>
            <person name="Armstrong J."/>
            <person name="Forsburg S.L."/>
            <person name="Cerutti L."/>
            <person name="Lowe T."/>
            <person name="McCombie W.R."/>
            <person name="Paulsen I."/>
            <person name="Potashkin J."/>
            <person name="Shpakovski G.V."/>
            <person name="Ussery D."/>
            <person name="Barrell B.G."/>
            <person name="Nurse P."/>
        </authorList>
    </citation>
    <scope>NUCLEOTIDE SEQUENCE [LARGE SCALE GENOMIC DNA]</scope>
    <source>
        <strain>972 / ATCC 24843</strain>
    </source>
</reference>
<protein>
    <recommendedName>
        <fullName>Orotidine 5'-phosphate decarboxylase</fullName>
        <ecNumber>4.1.1.23</ecNumber>
    </recommendedName>
    <alternativeName>
        <fullName>OMP decarboxylase</fullName>
        <shortName>OMPDCase</shortName>
        <shortName>OMPdecase</shortName>
    </alternativeName>
    <alternativeName>
        <fullName>Uridine 5'-monophosphate synthase</fullName>
        <shortName>UMP synthase</shortName>
    </alternativeName>
</protein>
<sequence>MDARVFQSYSARAEGMKNPIAKELLALMEEKQSNLSVAVDLTKKSEILELVDKIGPYVCVIKTHIDVVEDFDQDMVEKLVALGKKHRFLIFEDRKFADIGNTVKLQYASGVYKIASWAHITNCHTVPGEGIIQGLKEVGLPLGRGLLLLAEMSSKGSLATGSYTEKTLEWFEKHTDFCFGFIAGRRFPNLQSDYITMSPGIGLDVKGDGLGQQYRTPEEVIVNCGSDIIIVGRGVYGAGRNPVVEAKRYREAGWKAYQQRLSQH</sequence>